<protein>
    <recommendedName>
        <fullName evidence="1">Chromosomal replication initiator protein DnaA</fullName>
    </recommendedName>
</protein>
<gene>
    <name evidence="1" type="primary">dnaA</name>
    <name type="ordered locus">Sama_0013</name>
</gene>
<accession>A1S1G9</accession>
<reference key="1">
    <citation type="submission" date="2006-12" db="EMBL/GenBank/DDBJ databases">
        <title>Complete sequence of Shewanella amazonensis SB2B.</title>
        <authorList>
            <consortium name="US DOE Joint Genome Institute"/>
            <person name="Copeland A."/>
            <person name="Lucas S."/>
            <person name="Lapidus A."/>
            <person name="Barry K."/>
            <person name="Detter J.C."/>
            <person name="Glavina del Rio T."/>
            <person name="Hammon N."/>
            <person name="Israni S."/>
            <person name="Dalin E."/>
            <person name="Tice H."/>
            <person name="Pitluck S."/>
            <person name="Munk A.C."/>
            <person name="Brettin T."/>
            <person name="Bruce D."/>
            <person name="Han C."/>
            <person name="Tapia R."/>
            <person name="Gilna P."/>
            <person name="Schmutz J."/>
            <person name="Larimer F."/>
            <person name="Land M."/>
            <person name="Hauser L."/>
            <person name="Kyrpides N."/>
            <person name="Mikhailova N."/>
            <person name="Fredrickson J."/>
            <person name="Richardson P."/>
        </authorList>
    </citation>
    <scope>NUCLEOTIDE SEQUENCE [LARGE SCALE GENOMIC DNA]</scope>
    <source>
        <strain>ATCC BAA-1098 / SB2B</strain>
    </source>
</reference>
<feature type="chain" id="PRO_1000048715" description="Chromosomal replication initiator protein DnaA">
    <location>
        <begin position="1"/>
        <end position="457"/>
    </location>
</feature>
<feature type="region of interest" description="Domain I, interacts with DnaA modulators" evidence="1">
    <location>
        <begin position="1"/>
        <end position="90"/>
    </location>
</feature>
<feature type="region of interest" description="Disordered" evidence="2">
    <location>
        <begin position="79"/>
        <end position="120"/>
    </location>
</feature>
<feature type="region of interest" description="Domain II" evidence="1">
    <location>
        <begin position="91"/>
        <end position="120"/>
    </location>
</feature>
<feature type="region of interest" description="Domain III, AAA+ region" evidence="1">
    <location>
        <begin position="121"/>
        <end position="337"/>
    </location>
</feature>
<feature type="region of interest" description="Domain IV, binds dsDNA" evidence="1">
    <location>
        <begin position="338"/>
        <end position="457"/>
    </location>
</feature>
<feature type="compositionally biased region" description="Low complexity" evidence="2">
    <location>
        <begin position="84"/>
        <end position="99"/>
    </location>
</feature>
<feature type="binding site" evidence="1">
    <location>
        <position position="165"/>
    </location>
    <ligand>
        <name>ATP</name>
        <dbReference type="ChEBI" id="CHEBI:30616"/>
    </ligand>
</feature>
<feature type="binding site" evidence="1">
    <location>
        <position position="167"/>
    </location>
    <ligand>
        <name>ATP</name>
        <dbReference type="ChEBI" id="CHEBI:30616"/>
    </ligand>
</feature>
<feature type="binding site" evidence="1">
    <location>
        <position position="168"/>
    </location>
    <ligand>
        <name>ATP</name>
        <dbReference type="ChEBI" id="CHEBI:30616"/>
    </ligand>
</feature>
<feature type="binding site" evidence="1">
    <location>
        <position position="169"/>
    </location>
    <ligand>
        <name>ATP</name>
        <dbReference type="ChEBI" id="CHEBI:30616"/>
    </ligand>
</feature>
<dbReference type="EMBL" id="CP000507">
    <property type="protein sequence ID" value="ABL98225.1"/>
    <property type="molecule type" value="Genomic_DNA"/>
</dbReference>
<dbReference type="RefSeq" id="WP_011758136.1">
    <property type="nucleotide sequence ID" value="NC_008700.1"/>
</dbReference>
<dbReference type="SMR" id="A1S1G9"/>
<dbReference type="STRING" id="326297.Sama_0013"/>
<dbReference type="DNASU" id="4602270"/>
<dbReference type="KEGG" id="saz:Sama_0013"/>
<dbReference type="eggNOG" id="COG0593">
    <property type="taxonomic scope" value="Bacteria"/>
</dbReference>
<dbReference type="HOGENOM" id="CLU_026910_0_1_6"/>
<dbReference type="OrthoDB" id="9807019at2"/>
<dbReference type="Proteomes" id="UP000009175">
    <property type="component" value="Chromosome"/>
</dbReference>
<dbReference type="GO" id="GO:0005737">
    <property type="term" value="C:cytoplasm"/>
    <property type="evidence" value="ECO:0007669"/>
    <property type="project" value="UniProtKB-SubCell"/>
</dbReference>
<dbReference type="GO" id="GO:0005886">
    <property type="term" value="C:plasma membrane"/>
    <property type="evidence" value="ECO:0007669"/>
    <property type="project" value="TreeGrafter"/>
</dbReference>
<dbReference type="GO" id="GO:0005524">
    <property type="term" value="F:ATP binding"/>
    <property type="evidence" value="ECO:0007669"/>
    <property type="project" value="UniProtKB-UniRule"/>
</dbReference>
<dbReference type="GO" id="GO:0016887">
    <property type="term" value="F:ATP hydrolysis activity"/>
    <property type="evidence" value="ECO:0007669"/>
    <property type="project" value="InterPro"/>
</dbReference>
<dbReference type="GO" id="GO:0003688">
    <property type="term" value="F:DNA replication origin binding"/>
    <property type="evidence" value="ECO:0007669"/>
    <property type="project" value="UniProtKB-UniRule"/>
</dbReference>
<dbReference type="GO" id="GO:0008289">
    <property type="term" value="F:lipid binding"/>
    <property type="evidence" value="ECO:0007669"/>
    <property type="project" value="UniProtKB-KW"/>
</dbReference>
<dbReference type="GO" id="GO:0006270">
    <property type="term" value="P:DNA replication initiation"/>
    <property type="evidence" value="ECO:0007669"/>
    <property type="project" value="UniProtKB-UniRule"/>
</dbReference>
<dbReference type="GO" id="GO:0006275">
    <property type="term" value="P:regulation of DNA replication"/>
    <property type="evidence" value="ECO:0007669"/>
    <property type="project" value="UniProtKB-UniRule"/>
</dbReference>
<dbReference type="CDD" id="cd00009">
    <property type="entry name" value="AAA"/>
    <property type="match status" value="1"/>
</dbReference>
<dbReference type="CDD" id="cd06571">
    <property type="entry name" value="Bac_DnaA_C"/>
    <property type="match status" value="1"/>
</dbReference>
<dbReference type="FunFam" id="1.10.1750.10:FF:000001">
    <property type="entry name" value="Chromosomal replication initiator protein DnaA"/>
    <property type="match status" value="1"/>
</dbReference>
<dbReference type="FunFam" id="1.10.8.60:FF:000003">
    <property type="entry name" value="Chromosomal replication initiator protein DnaA"/>
    <property type="match status" value="1"/>
</dbReference>
<dbReference type="FunFam" id="3.30.300.180:FF:000001">
    <property type="entry name" value="Chromosomal replication initiator protein DnaA"/>
    <property type="match status" value="1"/>
</dbReference>
<dbReference type="FunFam" id="3.40.50.300:FF:000103">
    <property type="entry name" value="Chromosomal replication initiator protein DnaA"/>
    <property type="match status" value="1"/>
</dbReference>
<dbReference type="Gene3D" id="1.10.1750.10">
    <property type="match status" value="1"/>
</dbReference>
<dbReference type="Gene3D" id="1.10.8.60">
    <property type="match status" value="1"/>
</dbReference>
<dbReference type="Gene3D" id="3.30.300.180">
    <property type="match status" value="1"/>
</dbReference>
<dbReference type="Gene3D" id="3.40.50.300">
    <property type="entry name" value="P-loop containing nucleotide triphosphate hydrolases"/>
    <property type="match status" value="1"/>
</dbReference>
<dbReference type="HAMAP" id="MF_00377">
    <property type="entry name" value="DnaA_bact"/>
    <property type="match status" value="1"/>
</dbReference>
<dbReference type="InterPro" id="IPR003593">
    <property type="entry name" value="AAA+_ATPase"/>
</dbReference>
<dbReference type="InterPro" id="IPR001957">
    <property type="entry name" value="Chromosome_initiator_DnaA"/>
</dbReference>
<dbReference type="InterPro" id="IPR020591">
    <property type="entry name" value="Chromosome_initiator_DnaA-like"/>
</dbReference>
<dbReference type="InterPro" id="IPR018312">
    <property type="entry name" value="Chromosome_initiator_DnaA_CS"/>
</dbReference>
<dbReference type="InterPro" id="IPR013159">
    <property type="entry name" value="DnaA_C"/>
</dbReference>
<dbReference type="InterPro" id="IPR013317">
    <property type="entry name" value="DnaA_dom"/>
</dbReference>
<dbReference type="InterPro" id="IPR024633">
    <property type="entry name" value="DnaA_N_dom"/>
</dbReference>
<dbReference type="InterPro" id="IPR038454">
    <property type="entry name" value="DnaA_N_sf"/>
</dbReference>
<dbReference type="InterPro" id="IPR055199">
    <property type="entry name" value="Hda_lid"/>
</dbReference>
<dbReference type="InterPro" id="IPR027417">
    <property type="entry name" value="P-loop_NTPase"/>
</dbReference>
<dbReference type="InterPro" id="IPR010921">
    <property type="entry name" value="Trp_repressor/repl_initiator"/>
</dbReference>
<dbReference type="NCBIfam" id="TIGR00362">
    <property type="entry name" value="DnaA"/>
    <property type="match status" value="1"/>
</dbReference>
<dbReference type="PANTHER" id="PTHR30050">
    <property type="entry name" value="CHROMOSOMAL REPLICATION INITIATOR PROTEIN DNAA"/>
    <property type="match status" value="1"/>
</dbReference>
<dbReference type="PANTHER" id="PTHR30050:SF2">
    <property type="entry name" value="CHROMOSOMAL REPLICATION INITIATOR PROTEIN DNAA"/>
    <property type="match status" value="1"/>
</dbReference>
<dbReference type="Pfam" id="PF00308">
    <property type="entry name" value="Bac_DnaA"/>
    <property type="match status" value="1"/>
</dbReference>
<dbReference type="Pfam" id="PF08299">
    <property type="entry name" value="Bac_DnaA_C"/>
    <property type="match status" value="1"/>
</dbReference>
<dbReference type="Pfam" id="PF11638">
    <property type="entry name" value="DnaA_N"/>
    <property type="match status" value="1"/>
</dbReference>
<dbReference type="Pfam" id="PF22688">
    <property type="entry name" value="Hda_lid"/>
    <property type="match status" value="1"/>
</dbReference>
<dbReference type="PRINTS" id="PR00051">
    <property type="entry name" value="DNAA"/>
</dbReference>
<dbReference type="SMART" id="SM00382">
    <property type="entry name" value="AAA"/>
    <property type="match status" value="1"/>
</dbReference>
<dbReference type="SMART" id="SM00760">
    <property type="entry name" value="Bac_DnaA_C"/>
    <property type="match status" value="1"/>
</dbReference>
<dbReference type="SUPFAM" id="SSF52540">
    <property type="entry name" value="P-loop containing nucleoside triphosphate hydrolases"/>
    <property type="match status" value="1"/>
</dbReference>
<dbReference type="SUPFAM" id="SSF48295">
    <property type="entry name" value="TrpR-like"/>
    <property type="match status" value="1"/>
</dbReference>
<dbReference type="PROSITE" id="PS01008">
    <property type="entry name" value="DNAA"/>
    <property type="match status" value="1"/>
</dbReference>
<evidence type="ECO:0000255" key="1">
    <source>
        <dbReference type="HAMAP-Rule" id="MF_00377"/>
    </source>
</evidence>
<evidence type="ECO:0000256" key="2">
    <source>
        <dbReference type="SAM" id="MobiDB-lite"/>
    </source>
</evidence>
<sequence length="457" mass="51549">MAVSLWQQCIGRLQDELSAQQFSMWIRPLQAEMEGDTLVLYAPNRFVLDWVRDKYINSINQFFTEQLGDNAPKLRFDIGSRPSAKPQAPAPAAVKAAAPQPKPGNSFVSQPEPAVSNHRSNINPTYQFDNFVEGKSNQLGKAAALQVAENPGGAYNPLFLYGGTGLGKTHLLHAVGNGIIKNNPNAKVVYMHSERFVQDMVKALQNNAIEEFKRYYRSVDALFIDDIQFFANKDRSQEEFFHTFNALLEGNHQIILTSDRYPKEIDGVEDRLKSRFGWGLTVAIEPPELETRVAILMRKAQESGINLPDEVAFFIAKRLRSNVRELEGALNRVIANANFTGRPITIDFVREALRDLLALQEKLVTIDNIQKTVAEYYKIKMADMLSKRRSRSVARPRQMAMALSKELTNQSLPEIGDAFGGRDHTTVLHACRKIAQLREESHDIKEDYANLIRTLSS</sequence>
<proteinExistence type="inferred from homology"/>
<name>DNAA_SHEAM</name>
<organism>
    <name type="scientific">Shewanella amazonensis (strain ATCC BAA-1098 / SB2B)</name>
    <dbReference type="NCBI Taxonomy" id="326297"/>
    <lineage>
        <taxon>Bacteria</taxon>
        <taxon>Pseudomonadati</taxon>
        <taxon>Pseudomonadota</taxon>
        <taxon>Gammaproteobacteria</taxon>
        <taxon>Alteromonadales</taxon>
        <taxon>Shewanellaceae</taxon>
        <taxon>Shewanella</taxon>
    </lineage>
</organism>
<keyword id="KW-0067">ATP-binding</keyword>
<keyword id="KW-0963">Cytoplasm</keyword>
<keyword id="KW-0235">DNA replication</keyword>
<keyword id="KW-0238">DNA-binding</keyword>
<keyword id="KW-0446">Lipid-binding</keyword>
<keyword id="KW-0547">Nucleotide-binding</keyword>
<keyword id="KW-1185">Reference proteome</keyword>
<comment type="function">
    <text evidence="1">Plays an essential role in the initiation and regulation of chromosomal replication. ATP-DnaA binds to the origin of replication (oriC) to initiate formation of the DNA replication initiation complex once per cell cycle. Binds the DnaA box (a 9 base pair repeat at the origin) and separates the double-stranded (ds)DNA. Forms a right-handed helical filament on oriC DNA; dsDNA binds to the exterior of the filament while single-stranded (ss)DNA is stabiized in the filament's interior. The ATP-DnaA-oriC complex binds and stabilizes one strand of the AT-rich DNA unwinding element (DUE), permitting loading of DNA polymerase. After initiation quickly degrades to an ADP-DnaA complex that is not apt for DNA replication. Binds acidic phospholipids.</text>
</comment>
<comment type="subunit">
    <text evidence="1">Oligomerizes as a right-handed, spiral filament on DNA at oriC.</text>
</comment>
<comment type="subcellular location">
    <subcellularLocation>
        <location evidence="1">Cytoplasm</location>
    </subcellularLocation>
</comment>
<comment type="domain">
    <text evidence="1">Domain I is involved in oligomerization and binding regulators, domain II is flexibile and of varying length in different bacteria, domain III forms the AAA+ region, while domain IV binds dsDNA.</text>
</comment>
<comment type="similarity">
    <text evidence="1">Belongs to the DnaA family.</text>
</comment>